<organism>
    <name type="scientific">Streptococcus pneumoniae serotype 4 (strain ATCC BAA-334 / TIGR4)</name>
    <dbReference type="NCBI Taxonomy" id="170187"/>
    <lineage>
        <taxon>Bacteria</taxon>
        <taxon>Bacillati</taxon>
        <taxon>Bacillota</taxon>
        <taxon>Bacilli</taxon>
        <taxon>Lactobacillales</taxon>
        <taxon>Streptococcaceae</taxon>
        <taxon>Streptococcus</taxon>
    </lineage>
</organism>
<dbReference type="EMBL" id="M29686">
    <property type="protein sequence ID" value="AAA88600.1"/>
    <property type="molecule type" value="Genomic_DNA"/>
</dbReference>
<dbReference type="EMBL" id="AE005672">
    <property type="protein sequence ID" value="AAK74354.1"/>
    <property type="molecule type" value="Genomic_DNA"/>
</dbReference>
<dbReference type="EMBL" id="AJ240649">
    <property type="protein sequence ID" value="CAB39254.1"/>
    <property type="molecule type" value="Genomic_DNA"/>
</dbReference>
<dbReference type="EMBL" id="AJ240650">
    <property type="protein sequence ID" value="CAB39255.1"/>
    <property type="molecule type" value="Genomic_DNA"/>
</dbReference>
<dbReference type="EMBL" id="AJ240651">
    <property type="protein sequence ID" value="CAB39256.1"/>
    <property type="molecule type" value="Genomic_DNA"/>
</dbReference>
<dbReference type="EMBL" id="AJ240652">
    <property type="protein sequence ID" value="CAB39257.1"/>
    <property type="molecule type" value="Genomic_DNA"/>
</dbReference>
<dbReference type="EMBL" id="AJ240653">
    <property type="protein sequence ID" value="CAB39258.1"/>
    <property type="molecule type" value="Genomic_DNA"/>
</dbReference>
<dbReference type="EMBL" id="AJ240654">
    <property type="protein sequence ID" value="CAB39259.1"/>
    <property type="molecule type" value="Genomic_DNA"/>
</dbReference>
<dbReference type="EMBL" id="AJ240655">
    <property type="protein sequence ID" value="CAB39260.1"/>
    <property type="molecule type" value="Genomic_DNA"/>
</dbReference>
<dbReference type="EMBL" id="AJ240656">
    <property type="protein sequence ID" value="CAB39261.1"/>
    <property type="molecule type" value="Genomic_DNA"/>
</dbReference>
<dbReference type="EMBL" id="AJ240657">
    <property type="protein sequence ID" value="CAB39262.1"/>
    <property type="molecule type" value="Genomic_DNA"/>
</dbReference>
<dbReference type="EMBL" id="AJ240658">
    <property type="protein sequence ID" value="CAB39263.1"/>
    <property type="molecule type" value="Genomic_DNA"/>
</dbReference>
<dbReference type="EMBL" id="AJ240659">
    <property type="protein sequence ID" value="CAB39264.1"/>
    <property type="molecule type" value="Genomic_DNA"/>
</dbReference>
<dbReference type="EMBL" id="AJ240660">
    <property type="protein sequence ID" value="CAB39265.1"/>
    <property type="molecule type" value="Genomic_DNA"/>
</dbReference>
<dbReference type="EMBL" id="AJ240661">
    <property type="protein sequence ID" value="CAB39266.1"/>
    <property type="molecule type" value="Genomic_DNA"/>
</dbReference>
<dbReference type="EMBL" id="AJ240662">
    <property type="protein sequence ID" value="CAB39267.1"/>
    <property type="molecule type" value="Genomic_DNA"/>
</dbReference>
<dbReference type="EMBL" id="AJ240663">
    <property type="protein sequence ID" value="CAB39268.1"/>
    <property type="molecule type" value="Genomic_DNA"/>
</dbReference>
<dbReference type="EMBL" id="AJ240664">
    <property type="protein sequence ID" value="CAB39269.1"/>
    <property type="molecule type" value="Genomic_DNA"/>
</dbReference>
<dbReference type="EMBL" id="AJ240665">
    <property type="protein sequence ID" value="CAB39270.1"/>
    <property type="molecule type" value="Genomic_DNA"/>
</dbReference>
<dbReference type="EMBL" id="AJ240666">
    <property type="protein sequence ID" value="CAB39271.1"/>
    <property type="molecule type" value="Genomic_DNA"/>
</dbReference>
<dbReference type="EMBL" id="AJ240667">
    <property type="protein sequence ID" value="CAB39272.1"/>
    <property type="molecule type" value="Genomic_DNA"/>
</dbReference>
<dbReference type="EMBL" id="AJ240668">
    <property type="protein sequence ID" value="CAB39273.1"/>
    <property type="molecule type" value="Genomic_DNA"/>
</dbReference>
<dbReference type="EMBL" id="AJ240669">
    <property type="protein sequence ID" value="CAB39274.1"/>
    <property type="molecule type" value="Genomic_DNA"/>
</dbReference>
<dbReference type="EMBL" id="AJ240670">
    <property type="protein sequence ID" value="CAB39275.1"/>
    <property type="molecule type" value="Genomic_DNA"/>
</dbReference>
<dbReference type="EMBL" id="AJ390899">
    <property type="protein sequence ID" value="CAB71683.1"/>
    <property type="molecule type" value="Genomic_DNA"/>
</dbReference>
<dbReference type="EMBL" id="AJ390916">
    <property type="protein sequence ID" value="CAB71684.1"/>
    <property type="molecule type" value="Genomic_DNA"/>
</dbReference>
<dbReference type="EMBL" id="AJ390917">
    <property type="protein sequence ID" value="CAB71685.1"/>
    <property type="molecule type" value="Genomic_DNA"/>
</dbReference>
<dbReference type="EMBL" id="AJ390918">
    <property type="protein sequence ID" value="CAB71686.1"/>
    <property type="molecule type" value="Genomic_DNA"/>
</dbReference>
<dbReference type="EMBL" id="AJ390919">
    <property type="protein sequence ID" value="CAB71687.1"/>
    <property type="molecule type" value="Genomic_DNA"/>
</dbReference>
<dbReference type="EMBL" id="AJ390921">
    <property type="protein sequence ID" value="CAB71688.1"/>
    <property type="molecule type" value="Genomic_DNA"/>
</dbReference>
<dbReference type="EMBL" id="AJ390926">
    <property type="protein sequence ID" value="CAB71689.1"/>
    <property type="molecule type" value="Genomic_DNA"/>
</dbReference>
<dbReference type="EMBL" id="AJ390927">
    <property type="protein sequence ID" value="CAB71690.1"/>
    <property type="molecule type" value="Genomic_DNA"/>
</dbReference>
<dbReference type="EMBL" id="AJ390928">
    <property type="protein sequence ID" value="CAB71691.1"/>
    <property type="molecule type" value="Genomic_DNA"/>
</dbReference>
<dbReference type="EMBL" id="AJ390929">
    <property type="protein sequence ID" value="CAB71692.3"/>
    <property type="status" value="ALT_SEQ"/>
    <property type="molecule type" value="Genomic_DNA"/>
</dbReference>
<dbReference type="EMBL" id="AJ390930">
    <property type="protein sequence ID" value="CAB71693.1"/>
    <property type="molecule type" value="Genomic_DNA"/>
</dbReference>
<dbReference type="EMBL" id="AJ390931">
    <property type="protein sequence ID" value="CAB71694.1"/>
    <property type="molecule type" value="Genomic_DNA"/>
</dbReference>
<dbReference type="PIR" id="A33589">
    <property type="entry name" value="A33589"/>
</dbReference>
<dbReference type="PIR" id="A95020">
    <property type="entry name" value="A95020"/>
</dbReference>
<dbReference type="SMR" id="P0A3R1"/>
<dbReference type="PaxDb" id="170187-SP_0173"/>
<dbReference type="EnsemblBacteria" id="AAK74354">
    <property type="protein sequence ID" value="AAK74354"/>
    <property type="gene ID" value="SP_0173"/>
</dbReference>
<dbReference type="KEGG" id="spn:SP_0173"/>
<dbReference type="eggNOG" id="COG0323">
    <property type="taxonomic scope" value="Bacteria"/>
</dbReference>
<dbReference type="PhylomeDB" id="P0A3R1"/>
<dbReference type="BioCyc" id="SPNE170187:G1FZB-182-MONOMER"/>
<dbReference type="Proteomes" id="UP000000585">
    <property type="component" value="Chromosome"/>
</dbReference>
<dbReference type="GO" id="GO:0032300">
    <property type="term" value="C:mismatch repair complex"/>
    <property type="evidence" value="ECO:0007669"/>
    <property type="project" value="InterPro"/>
</dbReference>
<dbReference type="GO" id="GO:0005524">
    <property type="term" value="F:ATP binding"/>
    <property type="evidence" value="ECO:0007669"/>
    <property type="project" value="InterPro"/>
</dbReference>
<dbReference type="GO" id="GO:0016887">
    <property type="term" value="F:ATP hydrolysis activity"/>
    <property type="evidence" value="ECO:0007669"/>
    <property type="project" value="InterPro"/>
</dbReference>
<dbReference type="GO" id="GO:0140664">
    <property type="term" value="F:ATP-dependent DNA damage sensor activity"/>
    <property type="evidence" value="ECO:0007669"/>
    <property type="project" value="InterPro"/>
</dbReference>
<dbReference type="GO" id="GO:0030983">
    <property type="term" value="F:mismatched DNA binding"/>
    <property type="evidence" value="ECO:0007669"/>
    <property type="project" value="InterPro"/>
</dbReference>
<dbReference type="GO" id="GO:0006298">
    <property type="term" value="P:mismatch repair"/>
    <property type="evidence" value="ECO:0007669"/>
    <property type="project" value="UniProtKB-UniRule"/>
</dbReference>
<dbReference type="CDD" id="cd16926">
    <property type="entry name" value="HATPase_MutL-MLH-PMS-like"/>
    <property type="match status" value="1"/>
</dbReference>
<dbReference type="CDD" id="cd00782">
    <property type="entry name" value="MutL_Trans"/>
    <property type="match status" value="1"/>
</dbReference>
<dbReference type="FunFam" id="3.30.1370.100:FF:000004">
    <property type="entry name" value="DNA mismatch repair endonuclease MutL"/>
    <property type="match status" value="1"/>
</dbReference>
<dbReference type="FunFam" id="3.30.230.10:FF:000036">
    <property type="entry name" value="DNA mismatch repair endonuclease MutL"/>
    <property type="match status" value="1"/>
</dbReference>
<dbReference type="FunFam" id="3.30.565.10:FF:000003">
    <property type="entry name" value="DNA mismatch repair endonuclease MutL"/>
    <property type="match status" value="1"/>
</dbReference>
<dbReference type="Gene3D" id="3.30.230.10">
    <property type="match status" value="1"/>
</dbReference>
<dbReference type="Gene3D" id="3.30.565.10">
    <property type="entry name" value="Histidine kinase-like ATPase, C-terminal domain"/>
    <property type="match status" value="1"/>
</dbReference>
<dbReference type="Gene3D" id="3.30.1540.20">
    <property type="entry name" value="MutL, C-terminal domain, dimerisation subdomain"/>
    <property type="match status" value="1"/>
</dbReference>
<dbReference type="Gene3D" id="3.30.1370.100">
    <property type="entry name" value="MutL, C-terminal domain, regulatory subdomain"/>
    <property type="match status" value="1"/>
</dbReference>
<dbReference type="HAMAP" id="MF_00149">
    <property type="entry name" value="DNA_mis_repair"/>
    <property type="match status" value="1"/>
</dbReference>
<dbReference type="InterPro" id="IPR014762">
    <property type="entry name" value="DNA_mismatch_repair_CS"/>
</dbReference>
<dbReference type="InterPro" id="IPR020667">
    <property type="entry name" value="DNA_mismatch_repair_MutL"/>
</dbReference>
<dbReference type="InterPro" id="IPR013507">
    <property type="entry name" value="DNA_mismatch_S5_2-like"/>
</dbReference>
<dbReference type="InterPro" id="IPR036890">
    <property type="entry name" value="HATPase_C_sf"/>
</dbReference>
<dbReference type="InterPro" id="IPR002099">
    <property type="entry name" value="MutL/Mlh/PMS"/>
</dbReference>
<dbReference type="InterPro" id="IPR038973">
    <property type="entry name" value="MutL/Mlh/Pms-like"/>
</dbReference>
<dbReference type="InterPro" id="IPR014790">
    <property type="entry name" value="MutL_C"/>
</dbReference>
<dbReference type="InterPro" id="IPR042120">
    <property type="entry name" value="MutL_C_dimsub"/>
</dbReference>
<dbReference type="InterPro" id="IPR042121">
    <property type="entry name" value="MutL_C_regsub"/>
</dbReference>
<dbReference type="InterPro" id="IPR037198">
    <property type="entry name" value="MutL_C_sf"/>
</dbReference>
<dbReference type="InterPro" id="IPR020568">
    <property type="entry name" value="Ribosomal_Su5_D2-typ_SF"/>
</dbReference>
<dbReference type="InterPro" id="IPR014721">
    <property type="entry name" value="Ribsml_uS5_D2-typ_fold_subgr"/>
</dbReference>
<dbReference type="NCBIfam" id="TIGR00585">
    <property type="entry name" value="mutl"/>
    <property type="match status" value="1"/>
</dbReference>
<dbReference type="NCBIfam" id="NF000950">
    <property type="entry name" value="PRK00095.1-3"/>
    <property type="match status" value="1"/>
</dbReference>
<dbReference type="PANTHER" id="PTHR10073">
    <property type="entry name" value="DNA MISMATCH REPAIR PROTEIN MLH, PMS, MUTL"/>
    <property type="match status" value="1"/>
</dbReference>
<dbReference type="PANTHER" id="PTHR10073:SF12">
    <property type="entry name" value="DNA MISMATCH REPAIR PROTEIN MLH1"/>
    <property type="match status" value="1"/>
</dbReference>
<dbReference type="Pfam" id="PF01119">
    <property type="entry name" value="DNA_mis_repair"/>
    <property type="match status" value="1"/>
</dbReference>
<dbReference type="Pfam" id="PF13589">
    <property type="entry name" value="HATPase_c_3"/>
    <property type="match status" value="1"/>
</dbReference>
<dbReference type="Pfam" id="PF08676">
    <property type="entry name" value="MutL_C"/>
    <property type="match status" value="1"/>
</dbReference>
<dbReference type="SMART" id="SM01340">
    <property type="entry name" value="DNA_mis_repair"/>
    <property type="match status" value="1"/>
</dbReference>
<dbReference type="SMART" id="SM00853">
    <property type="entry name" value="MutL_C"/>
    <property type="match status" value="1"/>
</dbReference>
<dbReference type="SUPFAM" id="SSF55874">
    <property type="entry name" value="ATPase domain of HSP90 chaperone/DNA topoisomerase II/histidine kinase"/>
    <property type="match status" value="1"/>
</dbReference>
<dbReference type="SUPFAM" id="SSF118116">
    <property type="entry name" value="DNA mismatch repair protein MutL"/>
    <property type="match status" value="1"/>
</dbReference>
<dbReference type="SUPFAM" id="SSF54211">
    <property type="entry name" value="Ribosomal protein S5 domain 2-like"/>
    <property type="match status" value="1"/>
</dbReference>
<dbReference type="PROSITE" id="PS00058">
    <property type="entry name" value="DNA_MISMATCH_REPAIR_1"/>
    <property type="match status" value="1"/>
</dbReference>
<name>HEXB_STRPN</name>
<reference key="1">
    <citation type="journal article" date="1989" name="J. Bacteriol.">
        <title>Nucleotide sequence of the Streptococcus pneumoniae hexB mismatch repair gene: homology of HexB to MutL of Salmonella typhimurium and to PMS1 of Saccharomyces cerevisiae.</title>
        <authorList>
            <person name="Prudhomme M."/>
            <person name="Martin B."/>
            <person name="Mejean V."/>
            <person name="Claverys J.-P."/>
        </authorList>
    </citation>
    <scope>NUCLEOTIDE SEQUENCE [GENOMIC DNA]</scope>
    <source>
        <strain>R6 / R800</strain>
    </source>
</reference>
<reference key="2">
    <citation type="journal article" date="2001" name="Science">
        <title>Complete genome sequence of a virulent isolate of Streptococcus pneumoniae.</title>
        <authorList>
            <person name="Tettelin H."/>
            <person name="Nelson K.E."/>
            <person name="Paulsen I.T."/>
            <person name="Eisen J.A."/>
            <person name="Read T.D."/>
            <person name="Peterson S.N."/>
            <person name="Heidelberg J.F."/>
            <person name="DeBoy R.T."/>
            <person name="Haft D.H."/>
            <person name="Dodson R.J."/>
            <person name="Durkin A.S."/>
            <person name="Gwinn M.L."/>
            <person name="Kolonay J.F."/>
            <person name="Nelson W.C."/>
            <person name="Peterson J.D."/>
            <person name="Umayam L.A."/>
            <person name="White O."/>
            <person name="Salzberg S.L."/>
            <person name="Lewis M.R."/>
            <person name="Radune D."/>
            <person name="Holtzapple E.K."/>
            <person name="Khouri H.M."/>
            <person name="Wolf A.M."/>
            <person name="Utterback T.R."/>
            <person name="Hansen C.L."/>
            <person name="McDonald L.A."/>
            <person name="Feldblyum T.V."/>
            <person name="Angiuoli S.V."/>
            <person name="Dickinson T."/>
            <person name="Hickey E.K."/>
            <person name="Holt I.E."/>
            <person name="Loftus B.J."/>
            <person name="Yang F."/>
            <person name="Smith H.O."/>
            <person name="Venter J.C."/>
            <person name="Dougherty B.A."/>
            <person name="Morrison D.A."/>
            <person name="Hollingshead S.K."/>
            <person name="Fraser C.M."/>
        </authorList>
    </citation>
    <scope>NUCLEOTIDE SEQUENCE [LARGE SCALE GENOMIC DNA]</scope>
    <source>
        <strain>ATCC BAA-334 / TIGR4</strain>
    </source>
</reference>
<reference key="3">
    <citation type="journal article" date="1999" name="Infect. Immun.">
        <title>Molecular characterization of equine isolates of Streptococcus pneumoniae: natural disruption of genes encoding the virulence factors pneumolysin and autolysin.</title>
        <authorList>
            <person name="Whatmore A.M."/>
            <person name="King S.J."/>
            <person name="Doherty N.C."/>
            <person name="Sturgeon D."/>
            <person name="Chanter N."/>
            <person name="Dowson C.G."/>
        </authorList>
    </citation>
    <scope>NUCLEOTIDE SEQUENCE [GENOMIC DNA] OF 61-156 AND 498-614</scope>
    <source>
        <strain>1011</strain>
        <strain>1012</strain>
        <strain>497</strain>
        <strain>501</strain>
        <strain>873</strain>
        <strain>912</strain>
        <strain>E226</strain>
        <strain>KD12</strain>
        <strain>SP8</strain>
        <strain>SP9</strain>
    </source>
</reference>
<reference key="4">
    <citation type="journal article" date="2000" name="Infect. Immun.">
        <title>Genetic relationships between clinical isolates of Streptococcus pneumoniae, Streptococcus oralis, and Streptococcus mitis: characterization of 'atypical' pneumococci and organisms allied to S. mitis harboring S. pneumoniae virulence factor-encoding genes.</title>
        <authorList>
            <person name="Whatmore A.M."/>
            <person name="Efstratiou A."/>
            <person name="Pickerill A.P."/>
            <person name="Broughton K."/>
            <person name="Woodard G."/>
            <person name="Sturgeon D."/>
            <person name="George R."/>
            <person name="Dowson C.G."/>
        </authorList>
    </citation>
    <scope>NUCLEOTIDE SEQUENCE [GENOMIC DNA] OF 498-614</scope>
</reference>
<gene>
    <name type="primary">hexB</name>
    <name type="ordered locus">SP_0173</name>
</gene>
<protein>
    <recommendedName>
        <fullName>DNA mismatch repair protein HexB</fullName>
    </recommendedName>
</protein>
<feature type="chain" id="PRO_0000177977" description="DNA mismatch repair protein HexB">
    <location>
        <begin position="1"/>
        <end position="649"/>
    </location>
</feature>
<feature type="sequence variant" description="In strain: 951.">
    <original>H</original>
    <variation>Y</variation>
    <location>
        <position position="62"/>
    </location>
</feature>
<feature type="sequence conflict" description="In Ref. 1; AAA88600." evidence="1" ref="1">
    <original>V</original>
    <variation>C</variation>
    <location>
        <position position="28"/>
    </location>
</feature>
<sequence>MSHIIELPEMLANQIAAGEVIERPASVVKELVENAIDAGSSQIIIEIEEAGLKKVQITDNGHGIAHDEVELALRRHATSKIKNQADLFRIRTLGFRGEALPSIASVSVLTLLTAVDGASHGTKLVARGGEVEEVIPATSPVGTKVCVEDLFFNTPARLKYMKSQQAELSHIIDIVNRLGLAHPEISFSLISDGKEMTRTAGTGQLRQAIAGIYGLVSAKKMIEIENSDLDFEISGFVSLPELTRANRNYISLFINGRYIKNFLLNRAILDGFGSKLMVGRFPLAVIHIHIDPYLADVNVHPTKQEVRISKEKELMTLVSEAIANSLKEQTLIPDALENLAKSTVRNREKVEQTILPLKENTLYYEKTEPSRPSQTEVADYQVELTDEGQDLTLFAKETLDRLTKPAKLHFAERKPANYDQLDHPELDLASIDKAYDKLEREEASSFPELEFFGQMHGTYLFAQGRDGLYIIDQHAAQERVKYEEYRESIGNVDQSQQQLLVPYIFEFPADDALRLKERMPLLEEVGVFLAEYGENQFILREHPIWMAEEEIESGIYEMCDMLLLTKEVSIKKYRAELAIMMSCKRSIKANHRIDDHSARQLLYQLSQCDNPYNCPHGRPVLVHFTKSDMEKMFRRIQENHTSLRELGKY</sequence>
<proteinExistence type="inferred from homology"/>
<accession>P0A3R1</accession>
<accession>P14160</accession>
<accession>Q9R326</accession>
<accession>Q9R3V1</accession>
<accession>Q9Z4T8</accession>
<evidence type="ECO:0000305" key="1"/>
<comment type="function">
    <text>This protein is involved in the repair of mismatches in DNA. The hex system is nick-directed.</text>
</comment>
<comment type="similarity">
    <text evidence="1">Belongs to the DNA mismatch repair MutL/HexB family.</text>
</comment>
<keyword id="KW-0227">DNA damage</keyword>
<keyword id="KW-0234">DNA repair</keyword>
<keyword id="KW-1185">Reference proteome</keyword>